<accession>Q06700</accession>
<accession>D2RM69</accession>
<comment type="function">
    <text>Decarboxylase subunit of the primary sodium pump glutaconyl-CoA decarboxylase (GCD).</text>
</comment>
<comment type="catalytic activity">
    <reaction>
        <text>(2E)-glutaconyl-CoA + Na(+)(in) + H(+) = (2E)-butenoyl-CoA + Na(+)(out) + CO2</text>
        <dbReference type="Rhea" id="RHEA:23972"/>
        <dbReference type="ChEBI" id="CHEBI:15378"/>
        <dbReference type="ChEBI" id="CHEBI:16526"/>
        <dbReference type="ChEBI" id="CHEBI:29101"/>
        <dbReference type="ChEBI" id="CHEBI:57332"/>
        <dbReference type="ChEBI" id="CHEBI:57353"/>
        <dbReference type="EC" id="7.2.4.5"/>
    </reaction>
</comment>
<comment type="pathway">
    <text>Amino-acid degradation; L-glutamate degradation via hydroxyglutarate pathway; crotonoyl-CoA from L-glutamate: step 5/5.</text>
</comment>
<comment type="subunit">
    <text>Heterooctamer consisting of two alpha, two beta, two gamma and two delta subunits.</text>
</comment>
<organism>
    <name type="scientific">Acidaminococcus fermentans (strain ATCC 25085 / DSM 20731 / CCUG 9996 / CIP 106432 / VR4)</name>
    <dbReference type="NCBI Taxonomy" id="591001"/>
    <lineage>
        <taxon>Bacteria</taxon>
        <taxon>Bacillati</taxon>
        <taxon>Bacillota</taxon>
        <taxon>Negativicutes</taxon>
        <taxon>Acidaminococcales</taxon>
        <taxon>Acidaminococcaceae</taxon>
        <taxon>Acidaminococcus</taxon>
    </lineage>
</organism>
<name>GCDA_ACIFV</name>
<evidence type="ECO:0000255" key="1">
    <source>
        <dbReference type="PROSITE-ProRule" id="PRU01136"/>
    </source>
</evidence>
<evidence type="ECO:0000255" key="2">
    <source>
        <dbReference type="PROSITE-ProRule" id="PRU01137"/>
    </source>
</evidence>
<evidence type="ECO:0000255" key="3">
    <source>
        <dbReference type="PROSITE-ProRule" id="PRU01138"/>
    </source>
</evidence>
<evidence type="ECO:0007829" key="4">
    <source>
        <dbReference type="PDB" id="1PIX"/>
    </source>
</evidence>
<dbReference type="EC" id="7.2.4.5"/>
<dbReference type="EMBL" id="X69435">
    <property type="protein sequence ID" value="CAA49210.1"/>
    <property type="molecule type" value="Genomic_DNA"/>
</dbReference>
<dbReference type="EMBL" id="CP001859">
    <property type="protein sequence ID" value="ADB48171.1"/>
    <property type="molecule type" value="Genomic_DNA"/>
</dbReference>
<dbReference type="EMBL" id="X59645">
    <property type="protein sequence ID" value="CAA42195.1"/>
    <property type="molecule type" value="Genomic_DNA"/>
</dbReference>
<dbReference type="PIR" id="S29787">
    <property type="entry name" value="S29787"/>
</dbReference>
<dbReference type="RefSeq" id="WP_012939154.1">
    <property type="nucleotide sequence ID" value="NC_013740.1"/>
</dbReference>
<dbReference type="PDB" id="1PIX">
    <property type="method" value="X-ray"/>
    <property type="resolution" value="2.20 A"/>
    <property type="chains" value="A/B=1-587"/>
</dbReference>
<dbReference type="PDBsum" id="1PIX"/>
<dbReference type="SMR" id="Q06700"/>
<dbReference type="STRING" id="591001.Acfer_1817"/>
<dbReference type="DrugBank" id="DB01942">
    <property type="generic name" value="Formic acid"/>
</dbReference>
<dbReference type="TCDB" id="3.B.1.1.3">
    <property type="family name" value="the na(+)-transporting carboxylic acid decarboxylase (nat-dc) family"/>
</dbReference>
<dbReference type="GeneID" id="78335513"/>
<dbReference type="KEGG" id="afn:Acfer_1817"/>
<dbReference type="eggNOG" id="COG4799">
    <property type="taxonomic scope" value="Bacteria"/>
</dbReference>
<dbReference type="HOGENOM" id="CLU_033980_0_0_9"/>
<dbReference type="OrthoDB" id="9803706at2"/>
<dbReference type="BioCyc" id="MetaCyc:MONOMER-1054"/>
<dbReference type="BRENDA" id="7.2.4.5">
    <property type="organism ID" value="85"/>
</dbReference>
<dbReference type="SABIO-RK" id="Q06700"/>
<dbReference type="UniPathway" id="UPA00533">
    <property type="reaction ID" value="UER00688"/>
</dbReference>
<dbReference type="EvolutionaryTrace" id="Q06700"/>
<dbReference type="Proteomes" id="UP000001902">
    <property type="component" value="Chromosome"/>
</dbReference>
<dbReference type="GO" id="GO:1905202">
    <property type="term" value="C:methylcrotonoyl-CoA carboxylase complex"/>
    <property type="evidence" value="ECO:0007669"/>
    <property type="project" value="TreeGrafter"/>
</dbReference>
<dbReference type="GO" id="GO:0018801">
    <property type="term" value="F:glutaconyl-CoA decarboxylase activity"/>
    <property type="evidence" value="ECO:0007669"/>
    <property type="project" value="UniProtKB-EC"/>
</dbReference>
<dbReference type="GO" id="GO:0004485">
    <property type="term" value="F:methylcrotonoyl-CoA carboxylase activity"/>
    <property type="evidence" value="ECO:0007669"/>
    <property type="project" value="TreeGrafter"/>
</dbReference>
<dbReference type="GO" id="GO:0019552">
    <property type="term" value="P:glutamate catabolic process via 2-hydroxyglutarate"/>
    <property type="evidence" value="ECO:0007669"/>
    <property type="project" value="UniProtKB-UniPathway"/>
</dbReference>
<dbReference type="GO" id="GO:0006552">
    <property type="term" value="P:L-leucine catabolic process"/>
    <property type="evidence" value="ECO:0007669"/>
    <property type="project" value="TreeGrafter"/>
</dbReference>
<dbReference type="GO" id="GO:0006814">
    <property type="term" value="P:sodium ion transport"/>
    <property type="evidence" value="ECO:0007669"/>
    <property type="project" value="UniProtKB-KW"/>
</dbReference>
<dbReference type="Gene3D" id="3.90.226.10">
    <property type="entry name" value="2-enoyl-CoA Hydratase, Chain A, domain 1"/>
    <property type="match status" value="2"/>
</dbReference>
<dbReference type="Gene3D" id="1.20.5.680">
    <property type="entry name" value="Single Helix bin"/>
    <property type="match status" value="1"/>
</dbReference>
<dbReference type="InterPro" id="IPR034733">
    <property type="entry name" value="AcCoA_carboxyl_beta"/>
</dbReference>
<dbReference type="InterPro" id="IPR029045">
    <property type="entry name" value="ClpP/crotonase-like_dom_sf"/>
</dbReference>
<dbReference type="InterPro" id="IPR011763">
    <property type="entry name" value="COA_CT_C"/>
</dbReference>
<dbReference type="InterPro" id="IPR011762">
    <property type="entry name" value="COA_CT_N"/>
</dbReference>
<dbReference type="InterPro" id="IPR045190">
    <property type="entry name" value="MCCB/AccD1-like"/>
</dbReference>
<dbReference type="PANTHER" id="PTHR22855">
    <property type="entry name" value="ACETYL, PROPIONYL, PYRUVATE, AND GLUTACONYL CARBOXYLASE-RELATED"/>
    <property type="match status" value="1"/>
</dbReference>
<dbReference type="PANTHER" id="PTHR22855:SF13">
    <property type="entry name" value="METHYLCROTONOYL-COA CARBOXYLASE BETA CHAIN, MITOCHONDRIAL"/>
    <property type="match status" value="1"/>
</dbReference>
<dbReference type="Pfam" id="PF01039">
    <property type="entry name" value="Carboxyl_trans"/>
    <property type="match status" value="1"/>
</dbReference>
<dbReference type="SUPFAM" id="SSF52096">
    <property type="entry name" value="ClpP/crotonase"/>
    <property type="match status" value="2"/>
</dbReference>
<dbReference type="PROSITE" id="PS50989">
    <property type="entry name" value="COA_CT_CTER"/>
    <property type="match status" value="1"/>
</dbReference>
<dbReference type="PROSITE" id="PS50980">
    <property type="entry name" value="COA_CT_NTER"/>
    <property type="match status" value="1"/>
</dbReference>
<reference key="1">
    <citation type="journal article" date="1993" name="Eur. J. Biochem.">
        <title>Cloning, sequencing and expression of the gene encoding the carboxytransferase subunit of the biotin-dependent Na+ pump glutaconyl-CoA decarboxylase from Acidaminococcus fermentans in Escherichia coli.</title>
        <authorList>
            <person name="Bendrat K."/>
            <person name="Buckel W."/>
        </authorList>
    </citation>
    <scope>NUCLEOTIDE SEQUENCE [GENOMIC DNA]</scope>
    <scope>PARTIAL PROTEIN SEQUENCE</scope>
</reference>
<reference key="2">
    <citation type="journal article" date="2010" name="Stand. Genomic Sci.">
        <title>Complete genome sequence of Acidaminococcus fermentans type strain (VR4).</title>
        <authorList>
            <person name="Chang Y.J."/>
            <person name="Pukall R."/>
            <person name="Saunders E."/>
            <person name="Lapidus A."/>
            <person name="Copeland A."/>
            <person name="Nolan M."/>
            <person name="Glavina Del Rio T."/>
            <person name="Lucas S."/>
            <person name="Chen F."/>
            <person name="Tice H."/>
            <person name="Cheng J.F."/>
            <person name="Han C."/>
            <person name="Detter J.C."/>
            <person name="Bruce D."/>
            <person name="Goodwin L."/>
            <person name="Pitluck S."/>
            <person name="Mikhailova N."/>
            <person name="Liolios K."/>
            <person name="Pati A."/>
            <person name="Ivanova N."/>
            <person name="Mavromatis K."/>
            <person name="Chen A."/>
            <person name="Palaniappan K."/>
            <person name="Land M."/>
            <person name="Hauser L."/>
            <person name="Jeffries C.D."/>
            <person name="Brettin T."/>
            <person name="Rohde M."/>
            <person name="Goker M."/>
            <person name="Bristow J."/>
            <person name="Eisen J.A."/>
            <person name="Markowitz V."/>
            <person name="Hugenholtz P."/>
            <person name="Kyrpides N.C."/>
            <person name="Klenk H.P."/>
        </authorList>
    </citation>
    <scope>NUCLEOTIDE SEQUENCE [LARGE SCALE GENOMIC DNA]</scope>
    <source>
        <strain>ATCC 25085 / DSM 20731 / CCUG 9996 / CIP 106432 / VR4</strain>
    </source>
</reference>
<reference key="3">
    <citation type="journal article" date="1993" name="FEBS Lett.">
        <title>Identification of the gene encoding the activator of (R)-2-hydroxyglutaryl-CoA dehydratase from Acidaminococcus fermentans by gene expression in Escherichia coli.</title>
        <authorList>
            <person name="Bendrat K."/>
            <person name="Mueller U."/>
            <person name="Klees A.-G."/>
            <person name="Buckel W."/>
        </authorList>
    </citation>
    <scope>NUCLEOTIDE SEQUENCE [GENOMIC DNA] OF 548-587</scope>
</reference>
<reference key="4">
    <citation type="journal article" date="1995" name="Eur. J. Biochem.">
        <title>Activation of (R)-2-hydroxyglutaryl-CoA dehydratase from Acidaminococcus fermentans.</title>
        <authorList>
            <person name="Mueller U."/>
            <person name="Buckel W."/>
        </authorList>
    </citation>
    <scope>NUCLEOTIDE SEQUENCE [GENOMIC DNA] OF 548-587</scope>
</reference>
<reference key="5">
    <citation type="journal article" date="2003" name="EMBO J.">
        <title>Crystal structure of the carboxyltransferase subunit of the bacterial sodium ion pump glutaconyl-coenzyme A decarboxylase.</title>
        <authorList>
            <person name="Wendt K.S."/>
            <person name="Schall I."/>
            <person name="Huber R."/>
            <person name="Buckel W."/>
            <person name="Jacob U."/>
        </authorList>
    </citation>
    <scope>X-RAY CRYSTALLOGRAPHY (2.2 ANGSTROMS)</scope>
</reference>
<protein>
    <recommendedName>
        <fullName>Glutaconyl-CoA decarboxylase subunit alpha</fullName>
        <ecNumber>7.2.4.5</ecNumber>
    </recommendedName>
    <alternativeName>
        <fullName>Carboxyltransferase</fullName>
    </alternativeName>
</protein>
<keyword id="KW-0002">3D-structure</keyword>
<keyword id="KW-0092">Biotin</keyword>
<keyword id="KW-0210">Decarboxylase</keyword>
<keyword id="KW-0903">Direct protein sequencing</keyword>
<keyword id="KW-0406">Ion transport</keyword>
<keyword id="KW-0456">Lyase</keyword>
<keyword id="KW-1185">Reference proteome</keyword>
<keyword id="KW-0915">Sodium</keyword>
<keyword id="KW-0739">Sodium transport</keyword>
<keyword id="KW-1278">Translocase</keyword>
<keyword id="KW-0813">Transport</keyword>
<proteinExistence type="evidence at protein level"/>
<sequence>MGFYSMPRYFQNMPQVGKPLKKADAANEEQLKKIEEEIHQLIKEAQEAGKADADVNKRGELTALQRIEKLVEPGSWRPLNTLFNPQGNKNGSVAIVKGLGRVNGKWCVVVASDNKKLAGAWVPGQAECLLRASDTAKTLHVPLVYVLNCSGVKFDEQEKVYPNRRGGGTPFFRNAELNQLGIPVIVGIYGTNPAGGGYHSISPTVIIAHEKANMAVGGAGIMGGMNPKGHVDLEYANEIADMVDRTGKTEPPGAVDIHYTETGFMREVYASEEGVLEGIKKYVGMLPKYDPEFFRVDDPKAPAFPADDLYSMVPLNDKRAYDIYNVIARLFDNSELHEYKKGYGPEMVTGLAKVNGLLVGVVANVQGLLMNYPEYKAAGSVGIGGKLYRQGLVKMNEFVTLCARDRLPIVWIQDTTGIDVGNDAEKAELLGLGQSLIYSIQTSHIPQFEITLRKGTAAAHYVLGGPQGNDTNAFSIGTAATEIAVMNGETAATAMYSRRLAKDRKAGKDLQPTIDKMNNLIQAFYTKSRPKVCAELGLVDEIVDMNKIRGYVEAFTEAAYQNPESICPFHQMILPRAIREFETFVKK</sequence>
<gene>
    <name type="primary">gcdA</name>
    <name type="ordered locus">Acfer_1817</name>
</gene>
<feature type="chain" id="PRO_0000087438" description="Glutaconyl-CoA decarboxylase subunit alpha">
    <location>
        <begin position="1"/>
        <end position="587"/>
    </location>
</feature>
<feature type="domain" description="CoA carboxyltransferase N-terminal" evidence="1">
    <location>
        <begin position="31"/>
        <end position="298"/>
    </location>
</feature>
<feature type="domain" description="CoA carboxyltransferase C-terminal" evidence="2">
    <location>
        <begin position="295"/>
        <end position="558"/>
    </location>
</feature>
<feature type="region of interest" description="Carboxyltransferase" evidence="3">
    <location>
        <begin position="31"/>
        <end position="558"/>
    </location>
</feature>
<feature type="helix" evidence="4">
    <location>
        <begin position="7"/>
        <end position="10"/>
    </location>
</feature>
<feature type="helix" evidence="4">
    <location>
        <begin position="25"/>
        <end position="47"/>
    </location>
</feature>
<feature type="helix" evidence="4">
    <location>
        <begin position="52"/>
        <end position="57"/>
    </location>
</feature>
<feature type="helix" evidence="4">
    <location>
        <begin position="63"/>
        <end position="70"/>
    </location>
</feature>
<feature type="strand" evidence="4">
    <location>
        <begin position="77"/>
        <end position="80"/>
    </location>
</feature>
<feature type="strand" evidence="4">
    <location>
        <begin position="94"/>
        <end position="102"/>
    </location>
</feature>
<feature type="strand" evidence="4">
    <location>
        <begin position="105"/>
        <end position="112"/>
    </location>
</feature>
<feature type="turn" evidence="4">
    <location>
        <begin position="114"/>
        <end position="119"/>
    </location>
</feature>
<feature type="helix" evidence="4">
    <location>
        <begin position="125"/>
        <end position="139"/>
    </location>
</feature>
<feature type="strand" evidence="4">
    <location>
        <begin position="143"/>
        <end position="147"/>
    </location>
</feature>
<feature type="helix" evidence="4">
    <location>
        <begin position="154"/>
        <end position="156"/>
    </location>
</feature>
<feature type="helix" evidence="4">
    <location>
        <begin position="157"/>
        <end position="160"/>
    </location>
</feature>
<feature type="strand" evidence="4">
    <location>
        <begin position="161"/>
        <end position="163"/>
    </location>
</feature>
<feature type="helix" evidence="4">
    <location>
        <begin position="169"/>
        <end position="179"/>
    </location>
</feature>
<feature type="strand" evidence="4">
    <location>
        <begin position="184"/>
        <end position="188"/>
    </location>
</feature>
<feature type="strand" evidence="4">
    <location>
        <begin position="190"/>
        <end position="193"/>
    </location>
</feature>
<feature type="helix" evidence="4">
    <location>
        <begin position="195"/>
        <end position="201"/>
    </location>
</feature>
<feature type="strand" evidence="4">
    <location>
        <begin position="202"/>
        <end position="209"/>
    </location>
</feature>
<feature type="strand" evidence="4">
    <location>
        <begin position="213"/>
        <end position="216"/>
    </location>
</feature>
<feature type="strand" evidence="4">
    <location>
        <begin position="227"/>
        <end position="230"/>
    </location>
</feature>
<feature type="helix" evidence="4">
    <location>
        <begin position="233"/>
        <end position="244"/>
    </location>
</feature>
<feature type="strand" evidence="4">
    <location>
        <begin position="252"/>
        <end position="254"/>
    </location>
</feature>
<feature type="helix" evidence="4">
    <location>
        <begin position="255"/>
        <end position="258"/>
    </location>
</feature>
<feature type="turn" evidence="4">
    <location>
        <begin position="259"/>
        <end position="261"/>
    </location>
</feature>
<feature type="strand" evidence="4">
    <location>
        <begin position="267"/>
        <end position="271"/>
    </location>
</feature>
<feature type="helix" evidence="4">
    <location>
        <begin position="272"/>
        <end position="284"/>
    </location>
</feature>
<feature type="helix" evidence="4">
    <location>
        <begin position="291"/>
        <end position="294"/>
    </location>
</feature>
<feature type="strand" evidence="4">
    <location>
        <begin position="295"/>
        <end position="297"/>
    </location>
</feature>
<feature type="helix" evidence="4">
    <location>
        <begin position="306"/>
        <end position="308"/>
    </location>
</feature>
<feature type="helix" evidence="4">
    <location>
        <begin position="309"/>
        <end position="312"/>
    </location>
</feature>
<feature type="helix" evidence="4">
    <location>
        <begin position="323"/>
        <end position="328"/>
    </location>
</feature>
<feature type="helix" evidence="4">
    <location>
        <begin position="332"/>
        <end position="334"/>
    </location>
</feature>
<feature type="strand" evidence="4">
    <location>
        <begin position="337"/>
        <end position="340"/>
    </location>
</feature>
<feature type="strand" evidence="4">
    <location>
        <begin position="347"/>
        <end position="354"/>
    </location>
</feature>
<feature type="strand" evidence="4">
    <location>
        <begin position="357"/>
        <end position="364"/>
    </location>
</feature>
<feature type="strand" evidence="4">
    <location>
        <begin position="367"/>
        <end position="369"/>
    </location>
</feature>
<feature type="helix" evidence="4">
    <location>
        <begin position="389"/>
        <end position="404"/>
    </location>
</feature>
<feature type="strand" evidence="4">
    <location>
        <begin position="409"/>
        <end position="413"/>
    </location>
</feature>
<feature type="helix" evidence="4">
    <location>
        <begin position="422"/>
        <end position="426"/>
    </location>
</feature>
<feature type="helix" evidence="4">
    <location>
        <begin position="429"/>
        <end position="441"/>
    </location>
</feature>
<feature type="strand" evidence="4">
    <location>
        <begin position="447"/>
        <end position="451"/>
    </location>
</feature>
<feature type="strand" evidence="4">
    <location>
        <begin position="453"/>
        <end position="456"/>
    </location>
</feature>
<feature type="helix" evidence="4">
    <location>
        <begin position="459"/>
        <end position="462"/>
    </location>
</feature>
<feature type="turn" evidence="4">
    <location>
        <begin position="469"/>
        <end position="471"/>
    </location>
</feature>
<feature type="strand" evidence="4">
    <location>
        <begin position="472"/>
        <end position="477"/>
    </location>
</feature>
<feature type="strand" evidence="4">
    <location>
        <begin position="482"/>
        <end position="486"/>
    </location>
</feature>
<feature type="helix" evidence="4">
    <location>
        <begin position="488"/>
        <end position="505"/>
    </location>
</feature>
<feature type="helix" evidence="4">
    <location>
        <begin position="511"/>
        <end position="526"/>
    </location>
</feature>
<feature type="helix" evidence="4">
    <location>
        <begin position="530"/>
        <end position="536"/>
    </location>
</feature>
<feature type="strand" evidence="4">
    <location>
        <begin position="538"/>
        <end position="542"/>
    </location>
</feature>
<feature type="turn" evidence="4">
    <location>
        <begin position="545"/>
        <end position="547"/>
    </location>
</feature>
<feature type="helix" evidence="4">
    <location>
        <begin position="548"/>
        <end position="559"/>
    </location>
</feature>
<feature type="helix" evidence="4">
    <location>
        <begin position="569"/>
        <end position="571"/>
    </location>
</feature>
<feature type="helix" evidence="4">
    <location>
        <begin position="574"/>
        <end position="583"/>
    </location>
</feature>